<sequence length="333" mass="36909">MIETLLQSPSSWTNFFIFFGLAVLLLFAVLGFVTYGILAERKVMGFMQGRIGPNQVGGRFGLLQTVADVLKLLLKEDSIPKAADKPLFILAPVIAFAPAFMVLAVIPFTDKFQFADIGVGLLYYIAVSGITTIGVVTGGWASNNKYSLLGGMRAAAQMISYEIPLVMSVIGIVLLAGSLNLNEIVAAQEKVWYIFVQPIGFVVFLIAAVAELNRTPFDLPEAESELVSGYHTEYSGFRWAFFMLSEYVYFFGMASLITVLFLGGWNPVMFLGFIPGAVWFALKFSSVVFLLIWFRVTFPRIRGDQLMEFGWKVLLPIALANIFLTALIKELFF</sequence>
<dbReference type="EC" id="7.1.1.-" evidence="1"/>
<dbReference type="EMBL" id="CP001186">
    <property type="protein sequence ID" value="ACK94335.1"/>
    <property type="molecule type" value="Genomic_DNA"/>
</dbReference>
<dbReference type="RefSeq" id="WP_000573426.1">
    <property type="nucleotide sequence ID" value="NC_011772.1"/>
</dbReference>
<dbReference type="SMR" id="B7IQU9"/>
<dbReference type="GeneID" id="67469497"/>
<dbReference type="KEGG" id="bcg:BCG9842_B5533"/>
<dbReference type="HOGENOM" id="CLU_015134_0_1_9"/>
<dbReference type="Proteomes" id="UP000006744">
    <property type="component" value="Chromosome"/>
</dbReference>
<dbReference type="GO" id="GO:0005886">
    <property type="term" value="C:plasma membrane"/>
    <property type="evidence" value="ECO:0007669"/>
    <property type="project" value="UniProtKB-SubCell"/>
</dbReference>
<dbReference type="GO" id="GO:0003954">
    <property type="term" value="F:NADH dehydrogenase activity"/>
    <property type="evidence" value="ECO:0007669"/>
    <property type="project" value="TreeGrafter"/>
</dbReference>
<dbReference type="GO" id="GO:0016655">
    <property type="term" value="F:oxidoreductase activity, acting on NAD(P)H, quinone or similar compound as acceptor"/>
    <property type="evidence" value="ECO:0007669"/>
    <property type="project" value="UniProtKB-UniRule"/>
</dbReference>
<dbReference type="GO" id="GO:0048038">
    <property type="term" value="F:quinone binding"/>
    <property type="evidence" value="ECO:0007669"/>
    <property type="project" value="UniProtKB-KW"/>
</dbReference>
<dbReference type="GO" id="GO:0009060">
    <property type="term" value="P:aerobic respiration"/>
    <property type="evidence" value="ECO:0007669"/>
    <property type="project" value="TreeGrafter"/>
</dbReference>
<dbReference type="HAMAP" id="MF_01350">
    <property type="entry name" value="NDH1_NuoH"/>
    <property type="match status" value="1"/>
</dbReference>
<dbReference type="InterPro" id="IPR001694">
    <property type="entry name" value="NADH_UbQ_OxRdtase_su1/FPO"/>
</dbReference>
<dbReference type="InterPro" id="IPR018086">
    <property type="entry name" value="NADH_UbQ_OxRdtase_su1_CS"/>
</dbReference>
<dbReference type="NCBIfam" id="NF004741">
    <property type="entry name" value="PRK06076.1-2"/>
    <property type="match status" value="1"/>
</dbReference>
<dbReference type="PANTHER" id="PTHR11432">
    <property type="entry name" value="NADH DEHYDROGENASE SUBUNIT 1"/>
    <property type="match status" value="1"/>
</dbReference>
<dbReference type="PANTHER" id="PTHR11432:SF3">
    <property type="entry name" value="NADH-UBIQUINONE OXIDOREDUCTASE CHAIN 1"/>
    <property type="match status" value="1"/>
</dbReference>
<dbReference type="Pfam" id="PF00146">
    <property type="entry name" value="NADHdh"/>
    <property type="match status" value="1"/>
</dbReference>
<dbReference type="PROSITE" id="PS00668">
    <property type="entry name" value="COMPLEX1_ND1_2"/>
    <property type="match status" value="1"/>
</dbReference>
<protein>
    <recommendedName>
        <fullName evidence="1">NADH-quinone oxidoreductase subunit H</fullName>
        <ecNumber evidence="1">7.1.1.-</ecNumber>
    </recommendedName>
    <alternativeName>
        <fullName evidence="1">NADH dehydrogenase I subunit H</fullName>
    </alternativeName>
    <alternativeName>
        <fullName evidence="1">NDH-1 subunit H</fullName>
    </alternativeName>
</protein>
<keyword id="KW-1003">Cell membrane</keyword>
<keyword id="KW-0472">Membrane</keyword>
<keyword id="KW-0520">NAD</keyword>
<keyword id="KW-0874">Quinone</keyword>
<keyword id="KW-1278">Translocase</keyword>
<keyword id="KW-0812">Transmembrane</keyword>
<keyword id="KW-1133">Transmembrane helix</keyword>
<keyword id="KW-0830">Ubiquinone</keyword>
<gene>
    <name evidence="1" type="primary">nuoH</name>
    <name type="ordered locus">BCG9842_B5533</name>
</gene>
<proteinExistence type="inferred from homology"/>
<evidence type="ECO:0000255" key="1">
    <source>
        <dbReference type="HAMAP-Rule" id="MF_01350"/>
    </source>
</evidence>
<reference key="1">
    <citation type="submission" date="2008-10" db="EMBL/GenBank/DDBJ databases">
        <title>Genome sequence of Bacillus cereus G9842.</title>
        <authorList>
            <person name="Dodson R.J."/>
            <person name="Durkin A.S."/>
            <person name="Rosovitz M.J."/>
            <person name="Rasko D.A."/>
            <person name="Hoffmaster A."/>
            <person name="Ravel J."/>
            <person name="Sutton G."/>
        </authorList>
    </citation>
    <scope>NUCLEOTIDE SEQUENCE [LARGE SCALE GENOMIC DNA]</scope>
    <source>
        <strain>G9842</strain>
    </source>
</reference>
<accession>B7IQU9</accession>
<feature type="chain" id="PRO_1000143573" description="NADH-quinone oxidoreductase subunit H">
    <location>
        <begin position="1"/>
        <end position="333"/>
    </location>
</feature>
<feature type="transmembrane region" description="Helical" evidence="1">
    <location>
        <begin position="15"/>
        <end position="35"/>
    </location>
</feature>
<feature type="transmembrane region" description="Helical" evidence="1">
    <location>
        <begin position="88"/>
        <end position="108"/>
    </location>
</feature>
<feature type="transmembrane region" description="Helical" evidence="1">
    <location>
        <begin position="117"/>
        <end position="137"/>
    </location>
</feature>
<feature type="transmembrane region" description="Helical" evidence="1">
    <location>
        <begin position="159"/>
        <end position="179"/>
    </location>
</feature>
<feature type="transmembrane region" description="Helical" evidence="1">
    <location>
        <begin position="191"/>
        <end position="211"/>
    </location>
</feature>
<feature type="transmembrane region" description="Helical" evidence="1">
    <location>
        <begin position="239"/>
        <end position="259"/>
    </location>
</feature>
<feature type="transmembrane region" description="Helical" evidence="1">
    <location>
        <begin position="274"/>
        <end position="296"/>
    </location>
</feature>
<feature type="transmembrane region" description="Helical" evidence="1">
    <location>
        <begin position="313"/>
        <end position="333"/>
    </location>
</feature>
<organism>
    <name type="scientific">Bacillus cereus (strain G9842)</name>
    <dbReference type="NCBI Taxonomy" id="405531"/>
    <lineage>
        <taxon>Bacteria</taxon>
        <taxon>Bacillati</taxon>
        <taxon>Bacillota</taxon>
        <taxon>Bacilli</taxon>
        <taxon>Bacillales</taxon>
        <taxon>Bacillaceae</taxon>
        <taxon>Bacillus</taxon>
        <taxon>Bacillus cereus group</taxon>
    </lineage>
</organism>
<comment type="function">
    <text evidence="1">NDH-1 shuttles electrons from NADH, via FMN and iron-sulfur (Fe-S) centers, to quinones in the respiratory chain. The immediate electron acceptor for the enzyme in this species is believed to be ubiquinone. Couples the redox reaction to proton translocation (for every two electrons transferred, four hydrogen ions are translocated across the cytoplasmic membrane), and thus conserves the redox energy in a proton gradient. This subunit may bind ubiquinone.</text>
</comment>
<comment type="catalytic activity">
    <reaction evidence="1">
        <text>a quinone + NADH + 5 H(+)(in) = a quinol + NAD(+) + 4 H(+)(out)</text>
        <dbReference type="Rhea" id="RHEA:57888"/>
        <dbReference type="ChEBI" id="CHEBI:15378"/>
        <dbReference type="ChEBI" id="CHEBI:24646"/>
        <dbReference type="ChEBI" id="CHEBI:57540"/>
        <dbReference type="ChEBI" id="CHEBI:57945"/>
        <dbReference type="ChEBI" id="CHEBI:132124"/>
    </reaction>
</comment>
<comment type="subunit">
    <text evidence="1">NDH-1 is composed of 14 different subunits. Subunits NuoA, H, J, K, L, M, N constitute the membrane sector of the complex.</text>
</comment>
<comment type="subcellular location">
    <subcellularLocation>
        <location evidence="1">Cell membrane</location>
        <topology evidence="1">Multi-pass membrane protein</topology>
    </subcellularLocation>
</comment>
<comment type="similarity">
    <text evidence="1">Belongs to the complex I subunit 1 family.</text>
</comment>
<name>NUOH_BACC2</name>